<sequence length="767" mass="86940">MAKRHSHYQGSRRRHARGSNSKKAGRGNAKGIQGRKIKKKPTPTNSWHNSSIPLGEGDLDDVGADFNPGRAFISPKTIEDYYFGRDAKSRSMKMGGLRPGNRYDSSTDLQAGRAAFRKRPMQFVKAKEVYDPSHNMIQKLRAKNETKNSEEIVEREADVFEEPGKMTSDVEYINNEDSENEDDDSQNSPSTDHSLSSNESKVEDGDLFFVDEEAQQSPDLTKIKRVCIEEIARPREVAIEFDPILTIGKVELSVSEGNESKEISVDVPNKGNKTYHPFAGYISNVLHGMHTSDSDNDELDYEIETENNSEPLYESSASSEVDQGFNYVGQRHNSRADNNLLPSPSPQLTEDIKCLSINGTKTFEGNNDNLSSPASEELEFGFKEEDFVINTNDIVVSNIRMGGVDNSYYLRCYRLLGDYDFHWIDQDLLTDFVVDELGLPEDRLPAYLNFIKNSLIPKIEPAEPTYSDIPISDSSDEGDSYEGDSYEDDEDMASSVVHSDIEEGLDDLIAYTLKHDTERFKTFETKSLETKGKGKKKKLLIDDALALDTETLETLQSKFSKRIETKAKKRKAKEDFIDQENRNSNDMLKKYPYGLHIQNIKDEFESFLSRNNDRLTFPPLDPHGNKTVMKIAKHYNMKSSKIGKANHTSVVVEKIKKTKWSSPNYSLIDQLMRQRPVFMRIDIRRPREEQAAFERTKTIRGKFHVKEGEIVGQNAPEIGNENIGRRMLEKLGWKSGEGLGIQGNKGISEPIFAKIKKNRSGLRHSES</sequence>
<keyword id="KW-0963">Cytoplasm</keyword>
<keyword id="KW-0507">mRNA processing</keyword>
<keyword id="KW-0508">mRNA splicing</keyword>
<keyword id="KW-0539">Nucleus</keyword>
<keyword id="KW-0597">Phosphoprotein</keyword>
<feature type="chain" id="PRO_0000325003" description="Protein SQS1">
    <location>
        <begin position="1"/>
        <end position="767"/>
    </location>
</feature>
<feature type="domain" description="R3H">
    <location>
        <begin position="594"/>
        <end position="656"/>
    </location>
</feature>
<feature type="domain" description="G-patch" evidence="3">
    <location>
        <begin position="720"/>
        <end position="767"/>
    </location>
</feature>
<feature type="region of interest" description="Disordered" evidence="4">
    <location>
        <begin position="1"/>
        <end position="60"/>
    </location>
</feature>
<feature type="region of interest" description="Disordered" evidence="4">
    <location>
        <begin position="176"/>
        <end position="200"/>
    </location>
</feature>
<feature type="region of interest" description="Disordered" evidence="4">
    <location>
        <begin position="466"/>
        <end position="493"/>
    </location>
</feature>
<feature type="compositionally biased region" description="Basic residues" evidence="4">
    <location>
        <begin position="1"/>
        <end position="17"/>
    </location>
</feature>
<feature type="compositionally biased region" description="Polar residues" evidence="4">
    <location>
        <begin position="42"/>
        <end position="52"/>
    </location>
</feature>
<feature type="compositionally biased region" description="Acidic residues" evidence="4">
    <location>
        <begin position="176"/>
        <end position="185"/>
    </location>
</feature>
<feature type="compositionally biased region" description="Acidic residues" evidence="4">
    <location>
        <begin position="474"/>
        <end position="492"/>
    </location>
</feature>
<feature type="modified residue" description="Phosphoserine" evidence="2">
    <location>
        <position position="105"/>
    </location>
</feature>
<feature type="modified residue" description="Phosphoserine" evidence="2">
    <location>
        <position position="217"/>
    </location>
</feature>
<feature type="modified residue" description="Phosphoserine" evidence="2">
    <location>
        <position position="255"/>
    </location>
</feature>
<feature type="modified residue" description="Phosphoserine" evidence="2">
    <location>
        <position position="334"/>
    </location>
</feature>
<feature type="modified residue" description="Phosphoserine" evidence="2">
    <location>
        <position position="343"/>
    </location>
</feature>
<feature type="modified residue" description="Phosphoserine" evidence="2">
    <location>
        <position position="345"/>
    </location>
</feature>
<reference key="1">
    <citation type="journal article" date="2007" name="Proc. Natl. Acad. Sci. U.S.A.">
        <title>Genome sequencing and comparative analysis of Saccharomyces cerevisiae strain YJM789.</title>
        <authorList>
            <person name="Wei W."/>
            <person name="McCusker J.H."/>
            <person name="Hyman R.W."/>
            <person name="Jones T."/>
            <person name="Ning Y."/>
            <person name="Cao Z."/>
            <person name="Gu Z."/>
            <person name="Bruno D."/>
            <person name="Miranda M."/>
            <person name="Nguyen M."/>
            <person name="Wilhelmy J."/>
            <person name="Komp C."/>
            <person name="Tamse R."/>
            <person name="Wang X."/>
            <person name="Jia P."/>
            <person name="Luedi P."/>
            <person name="Oefner P.J."/>
            <person name="David L."/>
            <person name="Dietrich F.S."/>
            <person name="Li Y."/>
            <person name="Davis R.W."/>
            <person name="Steinmetz L.M."/>
        </authorList>
    </citation>
    <scope>NUCLEOTIDE SEQUENCE [LARGE SCALE GENOMIC DNA]</scope>
    <source>
        <strain>YJM789</strain>
    </source>
</reference>
<name>SQS1_YEAS7</name>
<proteinExistence type="inferred from homology"/>
<dbReference type="EMBL" id="AAFW02000067">
    <property type="protein sequence ID" value="EDN62598.1"/>
    <property type="molecule type" value="Genomic_DNA"/>
</dbReference>
<dbReference type="SMR" id="A6ZRL6"/>
<dbReference type="HOGENOM" id="CLU_021974_1_0_1"/>
<dbReference type="Proteomes" id="UP000007060">
    <property type="component" value="Unassembled WGS sequence"/>
</dbReference>
<dbReference type="GO" id="GO:0005737">
    <property type="term" value="C:cytoplasm"/>
    <property type="evidence" value="ECO:0007669"/>
    <property type="project" value="UniProtKB-SubCell"/>
</dbReference>
<dbReference type="GO" id="GO:0005634">
    <property type="term" value="C:nucleus"/>
    <property type="evidence" value="ECO:0007669"/>
    <property type="project" value="UniProtKB-SubCell"/>
</dbReference>
<dbReference type="GO" id="GO:0003676">
    <property type="term" value="F:nucleic acid binding"/>
    <property type="evidence" value="ECO:0007669"/>
    <property type="project" value="InterPro"/>
</dbReference>
<dbReference type="GO" id="GO:0006397">
    <property type="term" value="P:mRNA processing"/>
    <property type="evidence" value="ECO:0007669"/>
    <property type="project" value="UniProtKB-KW"/>
</dbReference>
<dbReference type="GO" id="GO:0008380">
    <property type="term" value="P:RNA splicing"/>
    <property type="evidence" value="ECO:0007669"/>
    <property type="project" value="UniProtKB-KW"/>
</dbReference>
<dbReference type="CDD" id="cd02646">
    <property type="entry name" value="R3H_G-patch"/>
    <property type="match status" value="1"/>
</dbReference>
<dbReference type="Gene3D" id="3.30.1370.50">
    <property type="entry name" value="R3H-like domain"/>
    <property type="match status" value="1"/>
</dbReference>
<dbReference type="InterPro" id="IPR000467">
    <property type="entry name" value="G_patch_dom"/>
</dbReference>
<dbReference type="InterPro" id="IPR036867">
    <property type="entry name" value="R3H_dom_sf"/>
</dbReference>
<dbReference type="InterPro" id="IPR034082">
    <property type="entry name" value="R3H_G-patch"/>
</dbReference>
<dbReference type="InterPro" id="IPR051189">
    <property type="entry name" value="Splicing_assoc_domain"/>
</dbReference>
<dbReference type="PANTHER" id="PTHR14195">
    <property type="entry name" value="G PATCH DOMAIN CONTAINING PROTEIN 2"/>
    <property type="match status" value="1"/>
</dbReference>
<dbReference type="Pfam" id="PF01585">
    <property type="entry name" value="G-patch"/>
    <property type="match status" value="1"/>
</dbReference>
<dbReference type="SMART" id="SM00443">
    <property type="entry name" value="G_patch"/>
    <property type="match status" value="1"/>
</dbReference>
<dbReference type="SUPFAM" id="SSF82708">
    <property type="entry name" value="R3H domain"/>
    <property type="match status" value="1"/>
</dbReference>
<dbReference type="PROSITE" id="PS50174">
    <property type="entry name" value="G_PATCH"/>
    <property type="match status" value="1"/>
</dbReference>
<evidence type="ECO:0000250" key="1"/>
<evidence type="ECO:0000250" key="2">
    <source>
        <dbReference type="UniProtKB" id="P53866"/>
    </source>
</evidence>
<evidence type="ECO:0000255" key="3">
    <source>
        <dbReference type="PROSITE-ProRule" id="PRU00092"/>
    </source>
</evidence>
<evidence type="ECO:0000256" key="4">
    <source>
        <dbReference type="SAM" id="MobiDB-lite"/>
    </source>
</evidence>
<evidence type="ECO:0000305" key="5"/>
<organism>
    <name type="scientific">Saccharomyces cerevisiae (strain YJM789)</name>
    <name type="common">Baker's yeast</name>
    <dbReference type="NCBI Taxonomy" id="307796"/>
    <lineage>
        <taxon>Eukaryota</taxon>
        <taxon>Fungi</taxon>
        <taxon>Dikarya</taxon>
        <taxon>Ascomycota</taxon>
        <taxon>Saccharomycotina</taxon>
        <taxon>Saccharomycetes</taxon>
        <taxon>Saccharomycetales</taxon>
        <taxon>Saccharomycetaceae</taxon>
        <taxon>Saccharomyces</taxon>
    </lineage>
</organism>
<protein>
    <recommendedName>
        <fullName>Protein SQS1</fullName>
    </recommendedName>
    <alternativeName>
        <fullName>Squelch of splicing suppression protein 1</fullName>
    </alternativeName>
</protein>
<gene>
    <name type="primary">SQS1</name>
    <name type="ORF">SCY_4577</name>
</gene>
<accession>A6ZRL6</accession>
<comment type="function">
    <text evidence="1">May be involved in splicing since overexpression antagonizes the suppression of splicing defects by SPP382 mutants.</text>
</comment>
<comment type="subcellular location">
    <subcellularLocation>
        <location evidence="1">Cytoplasm</location>
    </subcellularLocation>
    <subcellularLocation>
        <location evidence="1">Nucleus</location>
    </subcellularLocation>
</comment>
<comment type="similarity">
    <text evidence="5">Belongs to the SQS1 family.</text>
</comment>